<reference key="1">
    <citation type="journal article" date="2005" name="Science">
        <title>The genome of the basidiomycetous yeast and human pathogen Cryptococcus neoformans.</title>
        <authorList>
            <person name="Loftus B.J."/>
            <person name="Fung E."/>
            <person name="Roncaglia P."/>
            <person name="Rowley D."/>
            <person name="Amedeo P."/>
            <person name="Bruno D."/>
            <person name="Vamathevan J."/>
            <person name="Miranda M."/>
            <person name="Anderson I.J."/>
            <person name="Fraser J.A."/>
            <person name="Allen J.E."/>
            <person name="Bosdet I.E."/>
            <person name="Brent M.R."/>
            <person name="Chiu R."/>
            <person name="Doering T.L."/>
            <person name="Donlin M.J."/>
            <person name="D'Souza C.A."/>
            <person name="Fox D.S."/>
            <person name="Grinberg V."/>
            <person name="Fu J."/>
            <person name="Fukushima M."/>
            <person name="Haas B.J."/>
            <person name="Huang J.C."/>
            <person name="Janbon G."/>
            <person name="Jones S.J.M."/>
            <person name="Koo H.L."/>
            <person name="Krzywinski M.I."/>
            <person name="Kwon-Chung K.J."/>
            <person name="Lengeler K.B."/>
            <person name="Maiti R."/>
            <person name="Marra M.A."/>
            <person name="Marra R.E."/>
            <person name="Mathewson C.A."/>
            <person name="Mitchell T.G."/>
            <person name="Pertea M."/>
            <person name="Riggs F.R."/>
            <person name="Salzberg S.L."/>
            <person name="Schein J.E."/>
            <person name="Shvartsbeyn A."/>
            <person name="Shin H."/>
            <person name="Shumway M."/>
            <person name="Specht C.A."/>
            <person name="Suh B.B."/>
            <person name="Tenney A."/>
            <person name="Utterback T.R."/>
            <person name="Wickes B.L."/>
            <person name="Wortman J.R."/>
            <person name="Wye N.H."/>
            <person name="Kronstad J.W."/>
            <person name="Lodge J.K."/>
            <person name="Heitman J."/>
            <person name="Davis R.W."/>
            <person name="Fraser C.M."/>
            <person name="Hyman R.W."/>
        </authorList>
    </citation>
    <scope>NUCLEOTIDE SEQUENCE [LARGE SCALE GENOMIC DNA]</scope>
    <source>
        <strain>JEC21 / ATCC MYA-565</strain>
    </source>
</reference>
<feature type="chain" id="PRO_0000050864" description="Autophagy-related protein 18">
    <location>
        <begin position="1"/>
        <end position="423"/>
    </location>
</feature>
<feature type="repeat" description="WD 1">
    <location>
        <begin position="200"/>
        <end position="240"/>
    </location>
</feature>
<feature type="repeat" description="WD 2">
    <location>
        <begin position="245"/>
        <end position="284"/>
    </location>
</feature>
<feature type="region of interest" description="Disordered" evidence="3">
    <location>
        <begin position="281"/>
        <end position="317"/>
    </location>
</feature>
<feature type="short sequence motif" description="L/FRRG motif" evidence="2">
    <location>
        <begin position="241"/>
        <end position="245"/>
    </location>
</feature>
<feature type="compositionally biased region" description="Basic and acidic residues" evidence="3">
    <location>
        <begin position="282"/>
        <end position="295"/>
    </location>
</feature>
<evidence type="ECO:0000250" key="1"/>
<evidence type="ECO:0000250" key="2">
    <source>
        <dbReference type="UniProtKB" id="P43601"/>
    </source>
</evidence>
<evidence type="ECO:0000256" key="3">
    <source>
        <dbReference type="SAM" id="MobiDB-lite"/>
    </source>
</evidence>
<evidence type="ECO:0000305" key="4"/>
<gene>
    <name type="primary">ATG18</name>
    <name type="ordered locus">CNE02750</name>
</gene>
<organism>
    <name type="scientific">Cryptococcus neoformans var. neoformans serotype D (strain JEC21 / ATCC MYA-565)</name>
    <name type="common">Filobasidiella neoformans</name>
    <dbReference type="NCBI Taxonomy" id="214684"/>
    <lineage>
        <taxon>Eukaryota</taxon>
        <taxon>Fungi</taxon>
        <taxon>Dikarya</taxon>
        <taxon>Basidiomycota</taxon>
        <taxon>Agaricomycotina</taxon>
        <taxon>Tremellomycetes</taxon>
        <taxon>Tremellales</taxon>
        <taxon>Cryptococcaceae</taxon>
        <taxon>Cryptococcus</taxon>
        <taxon>Cryptococcus neoformans species complex</taxon>
    </lineage>
</organism>
<dbReference type="EMBL" id="AE017345">
    <property type="protein sequence ID" value="AAW43831.1"/>
    <property type="molecule type" value="Genomic_DNA"/>
</dbReference>
<dbReference type="RefSeq" id="XP_571138.1">
    <property type="nucleotide sequence ID" value="XM_571138.1"/>
</dbReference>
<dbReference type="SMR" id="P0CS28"/>
<dbReference type="FunCoup" id="P0CS28">
    <property type="interactions" value="265"/>
</dbReference>
<dbReference type="STRING" id="214684.P0CS28"/>
<dbReference type="PaxDb" id="214684-P0CS28"/>
<dbReference type="EnsemblFungi" id="AAW43831">
    <property type="protein sequence ID" value="AAW43831"/>
    <property type="gene ID" value="CNE02750"/>
</dbReference>
<dbReference type="GeneID" id="3257960"/>
<dbReference type="KEGG" id="cne:CNE02750"/>
<dbReference type="VEuPathDB" id="FungiDB:CNE02750"/>
<dbReference type="eggNOG" id="KOG2110">
    <property type="taxonomic scope" value="Eukaryota"/>
</dbReference>
<dbReference type="HOGENOM" id="CLU_025895_5_2_1"/>
<dbReference type="InParanoid" id="P0CS28"/>
<dbReference type="OMA" id="NIAILEM"/>
<dbReference type="OrthoDB" id="1667587at2759"/>
<dbReference type="Proteomes" id="UP000002149">
    <property type="component" value="Chromosome 5"/>
</dbReference>
<dbReference type="GO" id="GO:0005829">
    <property type="term" value="C:cytosol"/>
    <property type="evidence" value="ECO:0000318"/>
    <property type="project" value="GO_Central"/>
</dbReference>
<dbReference type="GO" id="GO:0010008">
    <property type="term" value="C:endosome membrane"/>
    <property type="evidence" value="ECO:0007669"/>
    <property type="project" value="UniProtKB-SubCell"/>
</dbReference>
<dbReference type="GO" id="GO:0000329">
    <property type="term" value="C:fungal-type vacuole membrane"/>
    <property type="evidence" value="ECO:0000318"/>
    <property type="project" value="GO_Central"/>
</dbReference>
<dbReference type="GO" id="GO:0034045">
    <property type="term" value="C:phagophore assembly site membrane"/>
    <property type="evidence" value="ECO:0000318"/>
    <property type="project" value="GO_Central"/>
</dbReference>
<dbReference type="GO" id="GO:0080025">
    <property type="term" value="F:phosphatidylinositol-3,5-bisphosphate binding"/>
    <property type="evidence" value="ECO:0000318"/>
    <property type="project" value="GO_Central"/>
</dbReference>
<dbReference type="GO" id="GO:0032266">
    <property type="term" value="F:phosphatidylinositol-3-phosphate binding"/>
    <property type="evidence" value="ECO:0000318"/>
    <property type="project" value="GO_Central"/>
</dbReference>
<dbReference type="GO" id="GO:0030674">
    <property type="term" value="F:protein-macromolecule adaptor activity"/>
    <property type="evidence" value="ECO:0000318"/>
    <property type="project" value="GO_Central"/>
</dbReference>
<dbReference type="GO" id="GO:0000422">
    <property type="term" value="P:autophagy of mitochondrion"/>
    <property type="evidence" value="ECO:0000318"/>
    <property type="project" value="GO_Central"/>
</dbReference>
<dbReference type="GO" id="GO:0061723">
    <property type="term" value="P:glycophagy"/>
    <property type="evidence" value="ECO:0000318"/>
    <property type="project" value="GO_Central"/>
</dbReference>
<dbReference type="GO" id="GO:0044804">
    <property type="term" value="P:nucleophagy"/>
    <property type="evidence" value="ECO:0000318"/>
    <property type="project" value="GO_Central"/>
</dbReference>
<dbReference type="GO" id="GO:0000425">
    <property type="term" value="P:pexophagy"/>
    <property type="evidence" value="ECO:0000318"/>
    <property type="project" value="GO_Central"/>
</dbReference>
<dbReference type="GO" id="GO:0034497">
    <property type="term" value="P:protein localization to phagophore assembly site"/>
    <property type="evidence" value="ECO:0000318"/>
    <property type="project" value="GO_Central"/>
</dbReference>
<dbReference type="GO" id="GO:0015031">
    <property type="term" value="P:protein transport"/>
    <property type="evidence" value="ECO:0007669"/>
    <property type="project" value="UniProtKB-KW"/>
</dbReference>
<dbReference type="FunFam" id="2.130.10.10:FF:000965">
    <property type="entry name" value="Autophagy-like protein 18 Atg18"/>
    <property type="match status" value="1"/>
</dbReference>
<dbReference type="Gene3D" id="2.130.10.10">
    <property type="entry name" value="YVTN repeat-like/Quinoprotein amine dehydrogenase"/>
    <property type="match status" value="1"/>
</dbReference>
<dbReference type="InterPro" id="IPR048720">
    <property type="entry name" value="PROPPIN"/>
</dbReference>
<dbReference type="InterPro" id="IPR015943">
    <property type="entry name" value="WD40/YVTN_repeat-like_dom_sf"/>
</dbReference>
<dbReference type="InterPro" id="IPR036322">
    <property type="entry name" value="WD40_repeat_dom_sf"/>
</dbReference>
<dbReference type="InterPro" id="IPR001680">
    <property type="entry name" value="WD40_rpt"/>
</dbReference>
<dbReference type="PANTHER" id="PTHR11227">
    <property type="entry name" value="WD-REPEAT PROTEIN INTERACTING WITH PHOSPHOINOSIDES WIPI -RELATED"/>
    <property type="match status" value="1"/>
</dbReference>
<dbReference type="Pfam" id="PF21032">
    <property type="entry name" value="PROPPIN"/>
    <property type="match status" value="3"/>
</dbReference>
<dbReference type="SMART" id="SM00320">
    <property type="entry name" value="WD40"/>
    <property type="match status" value="2"/>
</dbReference>
<dbReference type="SUPFAM" id="SSF50978">
    <property type="entry name" value="WD40 repeat-like"/>
    <property type="match status" value="1"/>
</dbReference>
<comment type="function">
    <text evidence="1">The PI(3,5)P2 regulatory complex regulates both the synthesis and turnover of phosphatidylinositol 3,5-bisphosphate (PtdIns(3,5)P2). Necessary for proper vacuole morphology. Plays an important role in osmotically-induced vacuole fragmentation. Required for cytoplasm to vacuole transport (Cvt) vesicle formation, pexophagy and starvation-induced autophagy. Involved in correct ATG9 trafficking to the pre-autophagosomal structure. Might also be involved in premeiotic DNA replication (By similarity).</text>
</comment>
<comment type="subunit">
    <text evidence="1">Component of the PI(3,5)P2 regulatory complex.</text>
</comment>
<comment type="subcellular location">
    <subcellularLocation>
        <location evidence="1">Preautophagosomal structure membrane</location>
        <topology evidence="1">Peripheral membrane protein</topology>
    </subcellularLocation>
    <subcellularLocation>
        <location evidence="1">Vacuole membrane</location>
        <topology evidence="1">Peripheral membrane protein</topology>
    </subcellularLocation>
    <subcellularLocation>
        <location evidence="1">Endosome membrane</location>
        <topology evidence="1">Peripheral membrane protein</topology>
    </subcellularLocation>
</comment>
<comment type="domain">
    <text evidence="1">The N-terminus might form a beta-propeller domain involved in specific binding to phosphatidylinositol 3,5-bisphosphate (PIP2), leading to the association of the protein to the membrane.</text>
</comment>
<comment type="domain">
    <text evidence="2">The L/FRRG motif is essential for the cytoplasm to vacuole transport (Cvt) pathway, for the recruitment of ATG8 and ATG16 to the PAS in nutrient-rich medium, and for its recruitment to and dissociation from the PAS under starvation conditions.</text>
</comment>
<comment type="similarity">
    <text evidence="4">Belongs to the WD repeat PROPPIN family.</text>
</comment>
<accession>P0CS28</accession>
<accession>Q55SA5</accession>
<accession>Q5KGQ2</accession>
<keyword id="KW-0072">Autophagy</keyword>
<keyword id="KW-0967">Endosome</keyword>
<keyword id="KW-0472">Membrane</keyword>
<keyword id="KW-0653">Protein transport</keyword>
<keyword id="KW-1185">Reference proteome</keyword>
<keyword id="KW-0677">Repeat</keyword>
<keyword id="KW-0813">Transport</keyword>
<keyword id="KW-0926">Vacuole</keyword>
<keyword id="KW-0853">WD repeat</keyword>
<sequence length="423" mass="45276">MSRLAKRHPDLLSCNFNQDYSCIAVGHKKGYTILNCDPFGKVHSNNDQGATGIVEMLFCTSLVALVGAAENQPSNSPRKLQIVNTKRQSTICELIFPTSVLAVKMNRKRLIVVLENEIYIYDISTMKLLHTIETGPNPNAVCALSSSSERSYLAYPSPVPSASSTPLSSSAIPAPPPAPTTGDVLLFDTISLTALNVIQAHKTPIAALALNSTGTMLATASDKGTVVRVFSVPDAKKLWQFRRGSSSARIFSINFNLMSTLLAVSSDTSTIHIYRLASSRKGGKDADDASTEEARSPTPSETPLASSPPLAAGKLDSHSAASSLRRRSYHLGKSFVGGVGGYLPKSVSEMWEPQRDFAFIKLRGNHGRTVVAMSATVPQVMVISSEGLFQAYNIDLENGGECSLMKEFALLGSEDFGNGSNGI</sequence>
<name>ATG18_CRYNJ</name>
<proteinExistence type="inferred from homology"/>
<protein>
    <recommendedName>
        <fullName>Autophagy-related protein 18</fullName>
    </recommendedName>
</protein>